<protein>
    <recommendedName>
        <fullName evidence="1">Phosphoribosylformylglycinamidine cyclo-ligase</fullName>
        <ecNumber evidence="1">6.3.3.1</ecNumber>
    </recommendedName>
    <alternativeName>
        <fullName evidence="1">AIR synthase</fullName>
    </alternativeName>
    <alternativeName>
        <fullName evidence="1">AIRS</fullName>
    </alternativeName>
    <alternativeName>
        <fullName evidence="1">Phosphoribosyl-aminoimidazole synthetase</fullName>
    </alternativeName>
</protein>
<comment type="catalytic activity">
    <reaction evidence="1">
        <text>2-formamido-N(1)-(5-O-phospho-beta-D-ribosyl)acetamidine + ATP = 5-amino-1-(5-phospho-beta-D-ribosyl)imidazole + ADP + phosphate + H(+)</text>
        <dbReference type="Rhea" id="RHEA:23032"/>
        <dbReference type="ChEBI" id="CHEBI:15378"/>
        <dbReference type="ChEBI" id="CHEBI:30616"/>
        <dbReference type="ChEBI" id="CHEBI:43474"/>
        <dbReference type="ChEBI" id="CHEBI:137981"/>
        <dbReference type="ChEBI" id="CHEBI:147287"/>
        <dbReference type="ChEBI" id="CHEBI:456216"/>
        <dbReference type="EC" id="6.3.3.1"/>
    </reaction>
</comment>
<comment type="pathway">
    <text evidence="1">Purine metabolism; IMP biosynthesis via de novo pathway; 5-amino-1-(5-phospho-D-ribosyl)imidazole from N(2)-formyl-N(1)-(5-phospho-D-ribosyl)glycinamide: step 2/2.</text>
</comment>
<comment type="subcellular location">
    <subcellularLocation>
        <location evidence="1">Cytoplasm</location>
    </subcellularLocation>
</comment>
<comment type="similarity">
    <text evidence="1">Belongs to the AIR synthase family.</text>
</comment>
<accession>Q5JFN7</accession>
<sequence>MLTYAQAGVDDEKTSRALKSIISLAKGTFEFRRGKLGEPAEDLGHYAALMDFGDFYLAITTDGVGTKVLVAEAVGKFDTIGIDMIAMNVNDLLCVGAEPVALVDYLAVKEPDERVFEGIAQGLYEGARQAGIAIVGGETAVMPDLINGFDLAGTAIGVVEKRKVITGKKIRPGDAVIGIKSSGIHSNGLTLARKLLIPKYGLDYEYEGKKLWEWLLEPTRIYVKAVLELIENVKVHGLAHITGGGLLNLKRLTSFGFSIEMPPIEGIFRLIYENGVPLEEMFRVFNMGVGMVAVVPREEKEEALQLLNRHFESFELGKVVGEPGIRVENYGIKL</sequence>
<reference key="1">
    <citation type="journal article" date="2005" name="Genome Res.">
        <title>Complete genome sequence of the hyperthermophilic archaeon Thermococcus kodakaraensis KOD1 and comparison with Pyrococcus genomes.</title>
        <authorList>
            <person name="Fukui T."/>
            <person name="Atomi H."/>
            <person name="Kanai T."/>
            <person name="Matsumi R."/>
            <person name="Fujiwara S."/>
            <person name="Imanaka T."/>
        </authorList>
    </citation>
    <scope>NUCLEOTIDE SEQUENCE [LARGE SCALE GENOMIC DNA]</scope>
    <source>
        <strain>ATCC BAA-918 / JCM 12380 / KOD1</strain>
    </source>
</reference>
<proteinExistence type="inferred from homology"/>
<dbReference type="EC" id="6.3.3.1" evidence="1"/>
<dbReference type="EMBL" id="AP006878">
    <property type="protein sequence ID" value="BAD84397.1"/>
    <property type="molecule type" value="Genomic_DNA"/>
</dbReference>
<dbReference type="RefSeq" id="WP_011249163.1">
    <property type="nucleotide sequence ID" value="NC_006624.1"/>
</dbReference>
<dbReference type="SMR" id="Q5JFN7"/>
<dbReference type="FunCoup" id="Q5JFN7">
    <property type="interactions" value="118"/>
</dbReference>
<dbReference type="STRING" id="69014.TK0208"/>
<dbReference type="EnsemblBacteria" id="BAD84397">
    <property type="protein sequence ID" value="BAD84397"/>
    <property type="gene ID" value="TK0208"/>
</dbReference>
<dbReference type="GeneID" id="78446712"/>
<dbReference type="KEGG" id="tko:TK0208"/>
<dbReference type="PATRIC" id="fig|69014.16.peg.207"/>
<dbReference type="eggNOG" id="arCOG00639">
    <property type="taxonomic scope" value="Archaea"/>
</dbReference>
<dbReference type="HOGENOM" id="CLU_047116_0_0_2"/>
<dbReference type="InParanoid" id="Q5JFN7"/>
<dbReference type="OrthoDB" id="6605at2157"/>
<dbReference type="PhylomeDB" id="Q5JFN7"/>
<dbReference type="UniPathway" id="UPA00074">
    <property type="reaction ID" value="UER00129"/>
</dbReference>
<dbReference type="Proteomes" id="UP000000536">
    <property type="component" value="Chromosome"/>
</dbReference>
<dbReference type="GO" id="GO:0005829">
    <property type="term" value="C:cytosol"/>
    <property type="evidence" value="ECO:0000318"/>
    <property type="project" value="GO_Central"/>
</dbReference>
<dbReference type="GO" id="GO:0005524">
    <property type="term" value="F:ATP binding"/>
    <property type="evidence" value="ECO:0007669"/>
    <property type="project" value="UniProtKB-KW"/>
</dbReference>
<dbReference type="GO" id="GO:0004637">
    <property type="term" value="F:phosphoribosylamine-glycine ligase activity"/>
    <property type="evidence" value="ECO:0000318"/>
    <property type="project" value="GO_Central"/>
</dbReference>
<dbReference type="GO" id="GO:0004641">
    <property type="term" value="F:phosphoribosylformylglycinamidine cyclo-ligase activity"/>
    <property type="evidence" value="ECO:0000318"/>
    <property type="project" value="GO_Central"/>
</dbReference>
<dbReference type="GO" id="GO:0006189">
    <property type="term" value="P:'de novo' IMP biosynthetic process"/>
    <property type="evidence" value="ECO:0007669"/>
    <property type="project" value="UniProtKB-UniRule"/>
</dbReference>
<dbReference type="GO" id="GO:0046084">
    <property type="term" value="P:adenine biosynthetic process"/>
    <property type="evidence" value="ECO:0000318"/>
    <property type="project" value="GO_Central"/>
</dbReference>
<dbReference type="GO" id="GO:0006164">
    <property type="term" value="P:purine nucleotide biosynthetic process"/>
    <property type="evidence" value="ECO:0000318"/>
    <property type="project" value="GO_Central"/>
</dbReference>
<dbReference type="CDD" id="cd02196">
    <property type="entry name" value="PurM"/>
    <property type="match status" value="1"/>
</dbReference>
<dbReference type="FunFam" id="3.30.1330.10:FF:000020">
    <property type="entry name" value="Phosphoribosylformylglycinamidine cyclo-ligase"/>
    <property type="match status" value="1"/>
</dbReference>
<dbReference type="FunFam" id="3.90.650.10:FF:000011">
    <property type="entry name" value="Phosphoribosylformylglycinamidine cyclo-ligase"/>
    <property type="match status" value="1"/>
</dbReference>
<dbReference type="Gene3D" id="3.90.650.10">
    <property type="entry name" value="PurM-like C-terminal domain"/>
    <property type="match status" value="1"/>
</dbReference>
<dbReference type="Gene3D" id="3.30.1330.10">
    <property type="entry name" value="PurM-like, N-terminal domain"/>
    <property type="match status" value="1"/>
</dbReference>
<dbReference type="HAMAP" id="MF_00741">
    <property type="entry name" value="AIRS"/>
    <property type="match status" value="1"/>
</dbReference>
<dbReference type="InterPro" id="IPR010918">
    <property type="entry name" value="PurM-like_C_dom"/>
</dbReference>
<dbReference type="InterPro" id="IPR036676">
    <property type="entry name" value="PurM-like_C_sf"/>
</dbReference>
<dbReference type="InterPro" id="IPR016188">
    <property type="entry name" value="PurM-like_N"/>
</dbReference>
<dbReference type="InterPro" id="IPR036921">
    <property type="entry name" value="PurM-like_N_sf"/>
</dbReference>
<dbReference type="InterPro" id="IPR004733">
    <property type="entry name" value="PurM_cligase"/>
</dbReference>
<dbReference type="NCBIfam" id="TIGR00878">
    <property type="entry name" value="purM"/>
    <property type="match status" value="1"/>
</dbReference>
<dbReference type="PANTHER" id="PTHR10520:SF12">
    <property type="entry name" value="TRIFUNCTIONAL PURINE BIOSYNTHETIC PROTEIN ADENOSINE-3"/>
    <property type="match status" value="1"/>
</dbReference>
<dbReference type="PANTHER" id="PTHR10520">
    <property type="entry name" value="TRIFUNCTIONAL PURINE BIOSYNTHETIC PROTEIN ADENOSINE-3-RELATED"/>
    <property type="match status" value="1"/>
</dbReference>
<dbReference type="Pfam" id="PF00586">
    <property type="entry name" value="AIRS"/>
    <property type="match status" value="1"/>
</dbReference>
<dbReference type="Pfam" id="PF02769">
    <property type="entry name" value="AIRS_C"/>
    <property type="match status" value="1"/>
</dbReference>
<dbReference type="SUPFAM" id="SSF56042">
    <property type="entry name" value="PurM C-terminal domain-like"/>
    <property type="match status" value="1"/>
</dbReference>
<dbReference type="SUPFAM" id="SSF55326">
    <property type="entry name" value="PurM N-terminal domain-like"/>
    <property type="match status" value="1"/>
</dbReference>
<keyword id="KW-0067">ATP-binding</keyword>
<keyword id="KW-0963">Cytoplasm</keyword>
<keyword id="KW-0436">Ligase</keyword>
<keyword id="KW-0547">Nucleotide-binding</keyword>
<keyword id="KW-0658">Purine biosynthesis</keyword>
<keyword id="KW-1185">Reference proteome</keyword>
<feature type="chain" id="PRO_0000148288" description="Phosphoribosylformylglycinamidine cyclo-ligase">
    <location>
        <begin position="1"/>
        <end position="334"/>
    </location>
</feature>
<organism>
    <name type="scientific">Thermococcus kodakarensis (strain ATCC BAA-918 / JCM 12380 / KOD1)</name>
    <name type="common">Pyrococcus kodakaraensis (strain KOD1)</name>
    <dbReference type="NCBI Taxonomy" id="69014"/>
    <lineage>
        <taxon>Archaea</taxon>
        <taxon>Methanobacteriati</taxon>
        <taxon>Methanobacteriota</taxon>
        <taxon>Thermococci</taxon>
        <taxon>Thermococcales</taxon>
        <taxon>Thermococcaceae</taxon>
        <taxon>Thermococcus</taxon>
    </lineage>
</organism>
<name>PUR5_THEKO</name>
<gene>
    <name evidence="1" type="primary">purM</name>
    <name type="ordered locus">TK0208</name>
</gene>
<evidence type="ECO:0000255" key="1">
    <source>
        <dbReference type="HAMAP-Rule" id="MF_00741"/>
    </source>
</evidence>